<name>MURA_RHOP5</name>
<dbReference type="EC" id="2.5.1.7" evidence="1"/>
<dbReference type="EMBL" id="CP000463">
    <property type="protein sequence ID" value="ABJ08408.1"/>
    <property type="molecule type" value="Genomic_DNA"/>
</dbReference>
<dbReference type="SMR" id="Q07I26"/>
<dbReference type="STRING" id="316055.RPE_4488"/>
<dbReference type="KEGG" id="rpe:RPE_4488"/>
<dbReference type="eggNOG" id="COG0766">
    <property type="taxonomic scope" value="Bacteria"/>
</dbReference>
<dbReference type="HOGENOM" id="CLU_027387_0_0_5"/>
<dbReference type="OrthoDB" id="9803760at2"/>
<dbReference type="UniPathway" id="UPA00219"/>
<dbReference type="GO" id="GO:0005737">
    <property type="term" value="C:cytoplasm"/>
    <property type="evidence" value="ECO:0007669"/>
    <property type="project" value="UniProtKB-SubCell"/>
</dbReference>
<dbReference type="GO" id="GO:0008760">
    <property type="term" value="F:UDP-N-acetylglucosamine 1-carboxyvinyltransferase activity"/>
    <property type="evidence" value="ECO:0007669"/>
    <property type="project" value="UniProtKB-UniRule"/>
</dbReference>
<dbReference type="GO" id="GO:0051301">
    <property type="term" value="P:cell division"/>
    <property type="evidence" value="ECO:0007669"/>
    <property type="project" value="UniProtKB-KW"/>
</dbReference>
<dbReference type="GO" id="GO:0071555">
    <property type="term" value="P:cell wall organization"/>
    <property type="evidence" value="ECO:0007669"/>
    <property type="project" value="UniProtKB-KW"/>
</dbReference>
<dbReference type="GO" id="GO:0009252">
    <property type="term" value="P:peptidoglycan biosynthetic process"/>
    <property type="evidence" value="ECO:0007669"/>
    <property type="project" value="UniProtKB-UniRule"/>
</dbReference>
<dbReference type="GO" id="GO:0008360">
    <property type="term" value="P:regulation of cell shape"/>
    <property type="evidence" value="ECO:0007669"/>
    <property type="project" value="UniProtKB-KW"/>
</dbReference>
<dbReference type="GO" id="GO:0019277">
    <property type="term" value="P:UDP-N-acetylgalactosamine biosynthetic process"/>
    <property type="evidence" value="ECO:0007669"/>
    <property type="project" value="InterPro"/>
</dbReference>
<dbReference type="CDD" id="cd01555">
    <property type="entry name" value="UdpNAET"/>
    <property type="match status" value="1"/>
</dbReference>
<dbReference type="FunFam" id="3.65.10.10:FF:000001">
    <property type="entry name" value="UDP-N-acetylglucosamine 1-carboxyvinyltransferase"/>
    <property type="match status" value="1"/>
</dbReference>
<dbReference type="Gene3D" id="3.65.10.10">
    <property type="entry name" value="Enolpyruvate transferase domain"/>
    <property type="match status" value="2"/>
</dbReference>
<dbReference type="HAMAP" id="MF_00111">
    <property type="entry name" value="MurA"/>
    <property type="match status" value="1"/>
</dbReference>
<dbReference type="InterPro" id="IPR001986">
    <property type="entry name" value="Enolpyruvate_Tfrase_dom"/>
</dbReference>
<dbReference type="InterPro" id="IPR036968">
    <property type="entry name" value="Enolpyruvate_Tfrase_sf"/>
</dbReference>
<dbReference type="InterPro" id="IPR050068">
    <property type="entry name" value="MurA_subfamily"/>
</dbReference>
<dbReference type="InterPro" id="IPR013792">
    <property type="entry name" value="RNA3'P_cycl/enolpyr_Trfase_a/b"/>
</dbReference>
<dbReference type="InterPro" id="IPR005750">
    <property type="entry name" value="UDP_GlcNAc_COvinyl_MurA"/>
</dbReference>
<dbReference type="NCBIfam" id="TIGR01072">
    <property type="entry name" value="murA"/>
    <property type="match status" value="1"/>
</dbReference>
<dbReference type="NCBIfam" id="NF006873">
    <property type="entry name" value="PRK09369.1"/>
    <property type="match status" value="1"/>
</dbReference>
<dbReference type="PANTHER" id="PTHR43783">
    <property type="entry name" value="UDP-N-ACETYLGLUCOSAMINE 1-CARBOXYVINYLTRANSFERASE"/>
    <property type="match status" value="1"/>
</dbReference>
<dbReference type="PANTHER" id="PTHR43783:SF1">
    <property type="entry name" value="UDP-N-ACETYLGLUCOSAMINE 1-CARBOXYVINYLTRANSFERASE"/>
    <property type="match status" value="1"/>
</dbReference>
<dbReference type="Pfam" id="PF00275">
    <property type="entry name" value="EPSP_synthase"/>
    <property type="match status" value="1"/>
</dbReference>
<dbReference type="SUPFAM" id="SSF55205">
    <property type="entry name" value="EPT/RTPC-like"/>
    <property type="match status" value="1"/>
</dbReference>
<comment type="function">
    <text evidence="1">Cell wall formation. Adds enolpyruvyl to UDP-N-acetylglucosamine.</text>
</comment>
<comment type="catalytic activity">
    <reaction evidence="1">
        <text>phosphoenolpyruvate + UDP-N-acetyl-alpha-D-glucosamine = UDP-N-acetyl-3-O-(1-carboxyvinyl)-alpha-D-glucosamine + phosphate</text>
        <dbReference type="Rhea" id="RHEA:18681"/>
        <dbReference type="ChEBI" id="CHEBI:43474"/>
        <dbReference type="ChEBI" id="CHEBI:57705"/>
        <dbReference type="ChEBI" id="CHEBI:58702"/>
        <dbReference type="ChEBI" id="CHEBI:68483"/>
        <dbReference type="EC" id="2.5.1.7"/>
    </reaction>
</comment>
<comment type="pathway">
    <text evidence="1">Cell wall biogenesis; peptidoglycan biosynthesis.</text>
</comment>
<comment type="subcellular location">
    <subcellularLocation>
        <location evidence="1">Cytoplasm</location>
    </subcellularLocation>
</comment>
<comment type="similarity">
    <text evidence="1">Belongs to the EPSP synthase family. MurA subfamily.</text>
</comment>
<feature type="chain" id="PRO_1000023085" description="UDP-N-acetylglucosamine 1-carboxyvinyltransferase">
    <location>
        <begin position="1"/>
        <end position="429"/>
    </location>
</feature>
<feature type="active site" description="Proton donor" evidence="1">
    <location>
        <position position="126"/>
    </location>
</feature>
<feature type="binding site" evidence="1">
    <location>
        <begin position="22"/>
        <end position="23"/>
    </location>
    <ligand>
        <name>phosphoenolpyruvate</name>
        <dbReference type="ChEBI" id="CHEBI:58702"/>
    </ligand>
</feature>
<feature type="binding site" evidence="1">
    <location>
        <position position="102"/>
    </location>
    <ligand>
        <name>UDP-N-acetyl-alpha-D-glucosamine</name>
        <dbReference type="ChEBI" id="CHEBI:57705"/>
    </ligand>
</feature>
<feature type="binding site" evidence="1">
    <location>
        <begin position="131"/>
        <end position="135"/>
    </location>
    <ligand>
        <name>UDP-N-acetyl-alpha-D-glucosamine</name>
        <dbReference type="ChEBI" id="CHEBI:57705"/>
    </ligand>
</feature>
<feature type="binding site" evidence="1">
    <location>
        <position position="316"/>
    </location>
    <ligand>
        <name>UDP-N-acetyl-alpha-D-glucosamine</name>
        <dbReference type="ChEBI" id="CHEBI:57705"/>
    </ligand>
</feature>
<feature type="binding site" evidence="1">
    <location>
        <position position="338"/>
    </location>
    <ligand>
        <name>UDP-N-acetyl-alpha-D-glucosamine</name>
        <dbReference type="ChEBI" id="CHEBI:57705"/>
    </ligand>
</feature>
<feature type="modified residue" description="2-(S-cysteinyl)pyruvic acid O-phosphothioketal" evidence="1">
    <location>
        <position position="126"/>
    </location>
</feature>
<reference key="1">
    <citation type="submission" date="2006-09" db="EMBL/GenBank/DDBJ databases">
        <title>Complete sequence of Rhodopseudomonas palustris BisA53.</title>
        <authorList>
            <consortium name="US DOE Joint Genome Institute"/>
            <person name="Copeland A."/>
            <person name="Lucas S."/>
            <person name="Lapidus A."/>
            <person name="Barry K."/>
            <person name="Detter J.C."/>
            <person name="Glavina del Rio T."/>
            <person name="Hammon N."/>
            <person name="Israni S."/>
            <person name="Dalin E."/>
            <person name="Tice H."/>
            <person name="Pitluck S."/>
            <person name="Chain P."/>
            <person name="Malfatti S."/>
            <person name="Shin M."/>
            <person name="Vergez L."/>
            <person name="Schmutz J."/>
            <person name="Larimer F."/>
            <person name="Land M."/>
            <person name="Hauser L."/>
            <person name="Pelletier D.A."/>
            <person name="Kyrpides N."/>
            <person name="Kim E."/>
            <person name="Harwood C.S."/>
            <person name="Oda Y."/>
            <person name="Richardson P."/>
        </authorList>
    </citation>
    <scope>NUCLEOTIDE SEQUENCE [LARGE SCALE GENOMIC DNA]</scope>
    <source>
        <strain>BisA53</strain>
    </source>
</reference>
<keyword id="KW-0131">Cell cycle</keyword>
<keyword id="KW-0132">Cell division</keyword>
<keyword id="KW-0133">Cell shape</keyword>
<keyword id="KW-0961">Cell wall biogenesis/degradation</keyword>
<keyword id="KW-0963">Cytoplasm</keyword>
<keyword id="KW-0573">Peptidoglycan synthesis</keyword>
<keyword id="KW-0670">Pyruvate</keyword>
<keyword id="KW-0808">Transferase</keyword>
<gene>
    <name evidence="1" type="primary">murA</name>
    <name type="ordered locus">RPE_4488</name>
</gene>
<sequence>MDRIRIVGGAQLNGTIPISGAKNAALPLMIAALLSDETLILDNVPRLADVAQLQRILGNHGVDILSAGKRPGDHEYQGQTLHISAKNIIDTTAPYELVSKMRASFWVIAPLLARMHVAKVSLPGGCAIGTRPVDLLIMALEKLGASITIDGGYVVASCPGGLKGAEIEFPKVTVSGTHVALMAATLAKGTTFIGNAACEPEIVDVADCLNKMGAKILGAGTPRITVEGVAKLHGARHTVLPDRIETGTYAMAVAMTGGDVQLSGARPELLQSALDVLTEAGATITVNNDGIRVARNGAGINPVTVTTAPFPGFPTDLQAQLMALMTRAKGDSHITETIFENRFMHVQELARFGARIQLDGETATINGVEKLRGAPVMATDLRASVSLVIAALAAEGETMVNRIYHLDRGFERLEEKLSACGATIERISG</sequence>
<evidence type="ECO:0000255" key="1">
    <source>
        <dbReference type="HAMAP-Rule" id="MF_00111"/>
    </source>
</evidence>
<protein>
    <recommendedName>
        <fullName evidence="1">UDP-N-acetylglucosamine 1-carboxyvinyltransferase</fullName>
        <ecNumber evidence="1">2.5.1.7</ecNumber>
    </recommendedName>
    <alternativeName>
        <fullName evidence="1">Enoylpyruvate transferase</fullName>
    </alternativeName>
    <alternativeName>
        <fullName evidence="1">UDP-N-acetylglucosamine enolpyruvyl transferase</fullName>
        <shortName evidence="1">EPT</shortName>
    </alternativeName>
</protein>
<organism>
    <name type="scientific">Rhodopseudomonas palustris (strain BisA53)</name>
    <dbReference type="NCBI Taxonomy" id="316055"/>
    <lineage>
        <taxon>Bacteria</taxon>
        <taxon>Pseudomonadati</taxon>
        <taxon>Pseudomonadota</taxon>
        <taxon>Alphaproteobacteria</taxon>
        <taxon>Hyphomicrobiales</taxon>
        <taxon>Nitrobacteraceae</taxon>
        <taxon>Rhodopseudomonas</taxon>
    </lineage>
</organism>
<proteinExistence type="inferred from homology"/>
<accession>Q07I26</accession>